<gene>
    <name type="primary">ndx-6</name>
    <name type="ORF">EEED8.8</name>
</gene>
<evidence type="ECO:0000250" key="1"/>
<evidence type="ECO:0000255" key="2">
    <source>
        <dbReference type="PROSITE-ProRule" id="PRU00794"/>
    </source>
</evidence>
<evidence type="ECO:0000305" key="3"/>
<feature type="chain" id="PRO_0000057136" description="Putative nudix hydrolase 6">
    <location>
        <begin position="1"/>
        <end position="260"/>
    </location>
</feature>
<feature type="domain" description="Nudix hydrolase" evidence="2">
    <location>
        <begin position="113"/>
        <end position="257"/>
    </location>
</feature>
<feature type="short sequence motif" description="Nudix box">
    <location>
        <begin position="148"/>
        <end position="170"/>
    </location>
</feature>
<feature type="binding site" evidence="1">
    <location>
        <position position="163"/>
    </location>
    <ligand>
        <name>Mg(2+)</name>
        <dbReference type="ChEBI" id="CHEBI:18420"/>
    </ligand>
</feature>
<feature type="binding site" evidence="1">
    <location>
        <position position="167"/>
    </location>
    <ligand>
        <name>Mg(2+)</name>
        <dbReference type="ChEBI" id="CHEBI:18420"/>
    </ligand>
</feature>
<keyword id="KW-0378">Hydrolase</keyword>
<keyword id="KW-0460">Magnesium</keyword>
<keyword id="KW-0464">Manganese</keyword>
<keyword id="KW-0479">Metal-binding</keyword>
<keyword id="KW-1185">Reference proteome</keyword>
<protein>
    <recommendedName>
        <fullName>Putative nudix hydrolase 6</fullName>
        <ecNumber>3.-.-.-</ecNumber>
    </recommendedName>
</protein>
<proteinExistence type="inferred from homology"/>
<accession>Q09297</accession>
<organism>
    <name type="scientific">Caenorhabditis elegans</name>
    <dbReference type="NCBI Taxonomy" id="6239"/>
    <lineage>
        <taxon>Eukaryota</taxon>
        <taxon>Metazoa</taxon>
        <taxon>Ecdysozoa</taxon>
        <taxon>Nematoda</taxon>
        <taxon>Chromadorea</taxon>
        <taxon>Rhabditida</taxon>
        <taxon>Rhabditina</taxon>
        <taxon>Rhabditomorpha</taxon>
        <taxon>Rhabditoidea</taxon>
        <taxon>Rhabditidae</taxon>
        <taxon>Peloderinae</taxon>
        <taxon>Caenorhabditis</taxon>
    </lineage>
</organism>
<sequence>MSFVHQKCRNIDTVYLGSNIHRLNVPDNLVKWSQEWSGYNPPAHTDPKVDGAVWADPEIDEKTFQPSWNAIDGKINRVSYVCQYSFDPVTLRPLNPIGRTGLSGRGLLGRWGPNHAADPIVSRTNDNGDLEFVAVQRHDNGEWAIPGGMVDAGEHVSQTLRREFAEEAMHGIVDSENLDELWNNGKELYRGYVDDPRNTDNAWMETVVFNFHDSKGLLKNVALQAGDDAKALRWIAVNSNEPLYASHSHFIDLLKESHSH</sequence>
<name>NDX6_CAEEL</name>
<reference key="1">
    <citation type="journal article" date="1998" name="Science">
        <title>Genome sequence of the nematode C. elegans: a platform for investigating biology.</title>
        <authorList>
            <consortium name="The C. elegans sequencing consortium"/>
        </authorList>
    </citation>
    <scope>NUCLEOTIDE SEQUENCE [LARGE SCALE GENOMIC DNA]</scope>
    <source>
        <strain>Bristol N2</strain>
    </source>
</reference>
<dbReference type="EC" id="3.-.-.-"/>
<dbReference type="EMBL" id="FO081042">
    <property type="protein sequence ID" value="CCD68736.1"/>
    <property type="molecule type" value="Genomic_DNA"/>
</dbReference>
<dbReference type="PIR" id="T15918">
    <property type="entry name" value="T15918"/>
</dbReference>
<dbReference type="RefSeq" id="NP_495015.1">
    <property type="nucleotide sequence ID" value="NM_062614.6"/>
</dbReference>
<dbReference type="SMR" id="Q09297"/>
<dbReference type="BioGRID" id="39260">
    <property type="interactions" value="5"/>
</dbReference>
<dbReference type="FunCoup" id="Q09297">
    <property type="interactions" value="2444"/>
</dbReference>
<dbReference type="STRING" id="6239.EEED8.8.1"/>
<dbReference type="PaxDb" id="6239-EEED8.8"/>
<dbReference type="PeptideAtlas" id="Q09297"/>
<dbReference type="EnsemblMetazoa" id="EEED8.8.1">
    <property type="protein sequence ID" value="EEED8.8.1"/>
    <property type="gene ID" value="WBGene00003583"/>
</dbReference>
<dbReference type="GeneID" id="173916"/>
<dbReference type="KEGG" id="cel:CELE_EEED8.8"/>
<dbReference type="UCSC" id="EEED8.8">
    <property type="organism name" value="c. elegans"/>
</dbReference>
<dbReference type="AGR" id="WB:WBGene00003583"/>
<dbReference type="CTD" id="173916"/>
<dbReference type="WormBase" id="EEED8.8">
    <property type="protein sequence ID" value="CE27911"/>
    <property type="gene ID" value="WBGene00003583"/>
    <property type="gene designation" value="ndx-6"/>
</dbReference>
<dbReference type="eggNOG" id="KOG4195">
    <property type="taxonomic scope" value="Eukaryota"/>
</dbReference>
<dbReference type="GeneTree" id="ENSGT00390000017405"/>
<dbReference type="HOGENOM" id="CLU_067226_0_0_1"/>
<dbReference type="InParanoid" id="Q09297"/>
<dbReference type="OMA" id="VQVYQGY"/>
<dbReference type="OrthoDB" id="9972248at2759"/>
<dbReference type="PhylomeDB" id="Q09297"/>
<dbReference type="Reactome" id="R-CEL-2393930">
    <property type="pathway name" value="Phosphate bond hydrolysis by NUDT proteins"/>
</dbReference>
<dbReference type="PRO" id="PR:Q09297"/>
<dbReference type="Proteomes" id="UP000001940">
    <property type="component" value="Chromosome II"/>
</dbReference>
<dbReference type="Bgee" id="WBGene00003583">
    <property type="expression patterns" value="Expressed in embryo and 4 other cell types or tissues"/>
</dbReference>
<dbReference type="GO" id="GO:0047631">
    <property type="term" value="F:ADP-ribose diphosphatase activity"/>
    <property type="evidence" value="ECO:0007669"/>
    <property type="project" value="InterPro"/>
</dbReference>
<dbReference type="GO" id="GO:0046872">
    <property type="term" value="F:metal ion binding"/>
    <property type="evidence" value="ECO:0007669"/>
    <property type="project" value="UniProtKB-KW"/>
</dbReference>
<dbReference type="CDD" id="cd03670">
    <property type="entry name" value="NUDIX_ADPRase_Nudt9"/>
    <property type="match status" value="1"/>
</dbReference>
<dbReference type="FunFam" id="3.90.79.10:FF:000110">
    <property type="entry name" value="Putative nudix hydrolase 6"/>
    <property type="match status" value="1"/>
</dbReference>
<dbReference type="Gene3D" id="3.90.79.10">
    <property type="entry name" value="Nucleoside Triphosphate Pyrophosphohydrolase"/>
    <property type="match status" value="1"/>
</dbReference>
<dbReference type="InterPro" id="IPR015797">
    <property type="entry name" value="NUDIX_hydrolase-like_dom_sf"/>
</dbReference>
<dbReference type="InterPro" id="IPR000086">
    <property type="entry name" value="NUDIX_hydrolase_dom"/>
</dbReference>
<dbReference type="InterPro" id="IPR039989">
    <property type="entry name" value="NUDT9"/>
</dbReference>
<dbReference type="PANTHER" id="PTHR13030:SF8">
    <property type="entry name" value="ADP-RIBOSE PYROPHOSPHATASE, MITOCHONDRIAL"/>
    <property type="match status" value="1"/>
</dbReference>
<dbReference type="PANTHER" id="PTHR13030">
    <property type="entry name" value="NUDIX HYDROLASE"/>
    <property type="match status" value="1"/>
</dbReference>
<dbReference type="Pfam" id="PF00293">
    <property type="entry name" value="NUDIX"/>
    <property type="match status" value="1"/>
</dbReference>
<dbReference type="SUPFAM" id="SSF55811">
    <property type="entry name" value="Nudix"/>
    <property type="match status" value="1"/>
</dbReference>
<dbReference type="PROSITE" id="PS51462">
    <property type="entry name" value="NUDIX"/>
    <property type="match status" value="1"/>
</dbReference>
<comment type="function">
    <text evidence="1">Probably mediates the hydrolysis of some nucleoside diphosphate derivatives.</text>
</comment>
<comment type="cofactor">
    <cofactor evidence="1">
        <name>Mg(2+)</name>
        <dbReference type="ChEBI" id="CHEBI:18420"/>
    </cofactor>
    <cofactor evidence="1">
        <name>Mn(2+)</name>
        <dbReference type="ChEBI" id="CHEBI:29035"/>
    </cofactor>
</comment>
<comment type="similarity">
    <text evidence="3">Belongs to the Nudix hydrolase family.</text>
</comment>